<comment type="function">
    <text evidence="3 4 6 7 8">Substrate-recognition component of a DCX (DDB1-CUL4-X-box) E3 ubiquitin-protein ligase complex of the DesCEND (destruction via C-end degrons) pathway, which recognizes a C-degron located at the extreme C terminus of target proteins, leading to their ubiquitination and degradation (PubMed:16949367, PubMed:16964240, PubMed:29779948). The C-degron recognized by the DesCEND pathway is usually a motif of less than ten residues and can be present in full-length proteins, truncated proteins or proteolytically cleaved forms (PubMed:29779948). The DCX(DCAF12) complex specifically recognizes proteins with a diglutamate (Glu-Glu) at the C-terminus, such as MAGEA3, MAGEA6 and CCT5, leading to their ubiquitination and degradation (PubMed:29779948, PubMed:31267705). Ubiquitination of MAGEA3, MAGEA6 by DCX(DCAF12) complex is required for starvation-induced autophagy (PubMed:31267705). Also directly recognizes the C-terminal glutamate-leucine (Glu-Leu) degron as an alternative degron in proteins such as MOV10, leading to their ubiquitination and degradation. Controls the protein level of MOV10 during spermatogenesis and in T cells, especially after their activation (PubMed:34065512).</text>
</comment>
<comment type="pathway">
    <text evidence="6 7">Protein modification; protein ubiquitination.</text>
</comment>
<comment type="subunit">
    <text evidence="3 4 7 8">Component of the DCX(DCAF12) E3 ubiquitin ligase complex, at least composed of CUL4 (CUL4A or CUL4B), DDB1, DCAF12 and RBX1.</text>
</comment>
<comment type="interaction">
    <interactant intactId="EBI-2559113">
        <id>Q5T6F0</id>
    </interactant>
    <interactant intactId="EBI-350322">
        <id>Q16531</id>
        <label>DDB1</label>
    </interactant>
    <organismsDiffer>false</organismsDiffer>
    <experiments>2</experiments>
</comment>
<comment type="subcellular location">
    <subcellularLocation>
        <location evidence="5 8">Cytoplasm</location>
    </subcellularLocation>
    <subcellularLocation>
        <location evidence="5">Cytoplasm</location>
        <location evidence="5">Cytoskeleton</location>
        <location evidence="5">Microtubule organizing center</location>
        <location evidence="5">Centrosome</location>
    </subcellularLocation>
    <subcellularLocation>
        <location evidence="8">Nucleus</location>
    </subcellularLocation>
</comment>
<comment type="tissue specificity">
    <text evidence="5">Highly expressed in lung cancer tissues and some cancer cell lines (PubMed:18957058). Restricted expression in normal testis (PubMed:18957058).</text>
</comment>
<comment type="similarity">
    <text evidence="12">Belongs to the WD repeat DCAF12 family.</text>
</comment>
<comment type="sequence caution" evidence="12">
    <conflict type="frameshift">
        <sequence resource="EMBL-CDS" id="BAA91106"/>
    </conflict>
</comment>
<comment type="sequence caution" evidence="12">
    <conflict type="erroneous initiation">
        <sequence resource="EMBL-CDS" id="BAB67785"/>
    </conflict>
    <text>Extended N-terminus.</text>
</comment>
<name>DCA12_HUMAN</name>
<protein>
    <recommendedName>
        <fullName evidence="12">DDB1- and CUL4-associated factor 12</fullName>
    </recommendedName>
    <alternativeName>
        <fullName evidence="11">Centrosome-related protein TCC52</fullName>
    </alternativeName>
    <alternativeName>
        <fullName evidence="11">Testis cancer centrosome-related protein</fullName>
    </alternativeName>
    <alternativeName>
        <fullName evidence="13">WD repeat-containing protein 40A</fullName>
    </alternativeName>
</protein>
<proteinExistence type="evidence at protein level"/>
<dbReference type="EMBL" id="DQ518909">
    <property type="protein sequence ID" value="ABG24246.1"/>
    <property type="molecule type" value="mRNA"/>
</dbReference>
<dbReference type="EMBL" id="AB067479">
    <property type="protein sequence ID" value="BAB67785.1"/>
    <property type="status" value="ALT_INIT"/>
    <property type="molecule type" value="mRNA"/>
</dbReference>
<dbReference type="EMBL" id="AK000354">
    <property type="protein sequence ID" value="BAA91106.1"/>
    <property type="status" value="ALT_FRAME"/>
    <property type="molecule type" value="mRNA"/>
</dbReference>
<dbReference type="EMBL" id="AK292935">
    <property type="protein sequence ID" value="BAF85624.1"/>
    <property type="molecule type" value="mRNA"/>
</dbReference>
<dbReference type="EMBL" id="AL354989">
    <property type="status" value="NOT_ANNOTATED_CDS"/>
    <property type="molecule type" value="Genomic_DNA"/>
</dbReference>
<dbReference type="EMBL" id="CH471071">
    <property type="protein sequence ID" value="EAW58472.1"/>
    <property type="molecule type" value="Genomic_DNA"/>
</dbReference>
<dbReference type="EMBL" id="CH471071">
    <property type="protein sequence ID" value="EAW58473.1"/>
    <property type="molecule type" value="Genomic_DNA"/>
</dbReference>
<dbReference type="EMBL" id="BC008893">
    <property type="protein sequence ID" value="AAH08893.2"/>
    <property type="molecule type" value="mRNA"/>
</dbReference>
<dbReference type="EMBL" id="BC063823">
    <property type="protein sequence ID" value="AAH63823.1"/>
    <property type="molecule type" value="mRNA"/>
</dbReference>
<dbReference type="EMBL" id="AL117646">
    <property type="protein sequence ID" value="CAB56028.2"/>
    <property type="molecule type" value="mRNA"/>
</dbReference>
<dbReference type="CCDS" id="CCDS6549.1"/>
<dbReference type="PIR" id="T17338">
    <property type="entry name" value="T17338"/>
</dbReference>
<dbReference type="RefSeq" id="NP_056212.1">
    <property type="nucleotide sequence ID" value="NM_015397.4"/>
</dbReference>
<dbReference type="RefSeq" id="XP_011516145.1">
    <property type="nucleotide sequence ID" value="XM_011517843.1"/>
</dbReference>
<dbReference type="PDB" id="3I7P">
    <property type="method" value="X-ray"/>
    <property type="resolution" value="3.00 A"/>
    <property type="chains" value="B=45-57"/>
</dbReference>
<dbReference type="PDB" id="8AJM">
    <property type="method" value="EM"/>
    <property type="resolution" value="2.83 A"/>
    <property type="chains" value="B=1-453"/>
</dbReference>
<dbReference type="PDB" id="8AJN">
    <property type="method" value="EM"/>
    <property type="resolution" value="3.00 A"/>
    <property type="chains" value="B=1-453"/>
</dbReference>
<dbReference type="PDB" id="8AJO">
    <property type="method" value="EM"/>
    <property type="resolution" value="30.60 A"/>
    <property type="chains" value="B=1-453"/>
</dbReference>
<dbReference type="PDB" id="8T9A">
    <property type="method" value="EM"/>
    <property type="resolution" value="3.17 A"/>
    <property type="chains" value="B=1-453"/>
</dbReference>
<dbReference type="PDBsum" id="3I7P"/>
<dbReference type="PDBsum" id="8AJM"/>
<dbReference type="PDBsum" id="8AJN"/>
<dbReference type="PDBsum" id="8AJO"/>
<dbReference type="PDBsum" id="8T9A"/>
<dbReference type="EMDB" id="EMD-15484"/>
<dbReference type="EMDB" id="EMD-15485"/>
<dbReference type="EMDB" id="EMD-15486"/>
<dbReference type="EMDB" id="EMD-41105"/>
<dbReference type="SMR" id="Q5T6F0"/>
<dbReference type="BioGRID" id="117377">
    <property type="interactions" value="107"/>
</dbReference>
<dbReference type="ComplexPortal" id="CPX-2405">
    <property type="entry name" value="CRL4-DCAF12 E3 ubiquitin ligase complex, CUL4A variant"/>
</dbReference>
<dbReference type="ComplexPortal" id="CPX-2406">
    <property type="entry name" value="CRL4-DCAF12 E3 ubiquitin ligase complex, CUL4B variant"/>
</dbReference>
<dbReference type="DIP" id="DIP-48760N"/>
<dbReference type="FunCoup" id="Q5T6F0">
    <property type="interactions" value="552"/>
</dbReference>
<dbReference type="IntAct" id="Q5T6F0">
    <property type="interactions" value="24"/>
</dbReference>
<dbReference type="STRING" id="9606.ENSP00000355114"/>
<dbReference type="iPTMnet" id="Q5T6F0"/>
<dbReference type="PhosphoSitePlus" id="Q5T6F0"/>
<dbReference type="BioMuta" id="DCAF12"/>
<dbReference type="DMDM" id="74756352"/>
<dbReference type="jPOST" id="Q5T6F0"/>
<dbReference type="MassIVE" id="Q5T6F0"/>
<dbReference type="PaxDb" id="9606-ENSP00000355114"/>
<dbReference type="PeptideAtlas" id="Q5T6F0"/>
<dbReference type="ProteomicsDB" id="64578"/>
<dbReference type="Pumba" id="Q5T6F0"/>
<dbReference type="Antibodypedia" id="2916">
    <property type="antibodies" value="136 antibodies from 27 providers"/>
</dbReference>
<dbReference type="DNASU" id="25853"/>
<dbReference type="Ensembl" id="ENST00000361264.9">
    <property type="protein sequence ID" value="ENSP00000355114.3"/>
    <property type="gene ID" value="ENSG00000198876.13"/>
</dbReference>
<dbReference type="GeneID" id="25853"/>
<dbReference type="KEGG" id="hsa:25853"/>
<dbReference type="MANE-Select" id="ENST00000361264.9">
    <property type="protein sequence ID" value="ENSP00000355114.3"/>
    <property type="RefSeq nucleotide sequence ID" value="NM_015397.4"/>
    <property type="RefSeq protein sequence ID" value="NP_056212.1"/>
</dbReference>
<dbReference type="UCSC" id="uc003ztt.3">
    <property type="organism name" value="human"/>
</dbReference>
<dbReference type="AGR" id="HGNC:19911"/>
<dbReference type="CTD" id="25853"/>
<dbReference type="DisGeNET" id="25853"/>
<dbReference type="GeneCards" id="DCAF12"/>
<dbReference type="HGNC" id="HGNC:19911">
    <property type="gene designation" value="DCAF12"/>
</dbReference>
<dbReference type="HPA" id="ENSG00000198876">
    <property type="expression patterns" value="Low tissue specificity"/>
</dbReference>
<dbReference type="MIM" id="620087">
    <property type="type" value="gene"/>
</dbReference>
<dbReference type="neXtProt" id="NX_Q5T6F0"/>
<dbReference type="OpenTargets" id="ENSG00000198876"/>
<dbReference type="PharmGKB" id="PA165585735"/>
<dbReference type="VEuPathDB" id="HostDB:ENSG00000198876"/>
<dbReference type="eggNOG" id="ENOG502QR7U">
    <property type="taxonomic scope" value="Eukaryota"/>
</dbReference>
<dbReference type="GeneTree" id="ENSGT00940000158028"/>
<dbReference type="HOGENOM" id="CLU_020124_1_0_1"/>
<dbReference type="InParanoid" id="Q5T6F0"/>
<dbReference type="OMA" id="GGEQYGW"/>
<dbReference type="OrthoDB" id="9610195at2759"/>
<dbReference type="PAN-GO" id="Q5T6F0">
    <property type="GO annotations" value="1 GO annotation based on evolutionary models"/>
</dbReference>
<dbReference type="PhylomeDB" id="Q5T6F0"/>
<dbReference type="TreeFam" id="TF323731"/>
<dbReference type="PathwayCommons" id="Q5T6F0"/>
<dbReference type="SignaLink" id="Q5T6F0"/>
<dbReference type="SIGNOR" id="Q5T6F0"/>
<dbReference type="UniPathway" id="UPA00143"/>
<dbReference type="BioGRID-ORCS" id="25853">
    <property type="hits" value="20 hits in 1194 CRISPR screens"/>
</dbReference>
<dbReference type="CD-CODE" id="8C2F96ED">
    <property type="entry name" value="Centrosome"/>
</dbReference>
<dbReference type="ChiTaRS" id="DCAF12">
    <property type="organism name" value="human"/>
</dbReference>
<dbReference type="EvolutionaryTrace" id="Q5T6F0"/>
<dbReference type="GenomeRNAi" id="25853"/>
<dbReference type="Pharos" id="Q5T6F0">
    <property type="development level" value="Tbio"/>
</dbReference>
<dbReference type="PRO" id="PR:Q5T6F0"/>
<dbReference type="Proteomes" id="UP000005640">
    <property type="component" value="Chromosome 9"/>
</dbReference>
<dbReference type="RNAct" id="Q5T6F0">
    <property type="molecule type" value="protein"/>
</dbReference>
<dbReference type="Bgee" id="ENSG00000198876">
    <property type="expression patterns" value="Expressed in trabecular bone tissue and 189 other cell types or tissues"/>
</dbReference>
<dbReference type="ExpressionAtlas" id="Q5T6F0">
    <property type="expression patterns" value="baseline and differential"/>
</dbReference>
<dbReference type="GO" id="GO:0005813">
    <property type="term" value="C:centrosome"/>
    <property type="evidence" value="ECO:0000314"/>
    <property type="project" value="UniProtKB"/>
</dbReference>
<dbReference type="GO" id="GO:0080008">
    <property type="term" value="C:Cul4-RING E3 ubiquitin ligase complex"/>
    <property type="evidence" value="ECO:0000314"/>
    <property type="project" value="UniProtKB"/>
</dbReference>
<dbReference type="GO" id="GO:0005737">
    <property type="term" value="C:cytoplasm"/>
    <property type="evidence" value="ECO:0000314"/>
    <property type="project" value="UniProtKB"/>
</dbReference>
<dbReference type="GO" id="GO:0005829">
    <property type="term" value="C:cytosol"/>
    <property type="evidence" value="ECO:0000314"/>
    <property type="project" value="UniProt"/>
</dbReference>
<dbReference type="GO" id="GO:0005634">
    <property type="term" value="C:nucleus"/>
    <property type="evidence" value="ECO:0007669"/>
    <property type="project" value="UniProtKB-SubCell"/>
</dbReference>
<dbReference type="GO" id="GO:1990756">
    <property type="term" value="F:ubiquitin-like ligase-substrate adaptor activity"/>
    <property type="evidence" value="ECO:0000314"/>
    <property type="project" value="UniProtKB"/>
</dbReference>
<dbReference type="GO" id="GO:0016567">
    <property type="term" value="P:protein ubiquitination"/>
    <property type="evidence" value="ECO:0007669"/>
    <property type="project" value="UniProtKB-UniPathway"/>
</dbReference>
<dbReference type="GO" id="GO:0010506">
    <property type="term" value="P:regulation of autophagy"/>
    <property type="evidence" value="ECO:0000314"/>
    <property type="project" value="UniProtKB"/>
</dbReference>
<dbReference type="GO" id="GO:0042110">
    <property type="term" value="P:T cell activation"/>
    <property type="evidence" value="ECO:0000314"/>
    <property type="project" value="UniProt"/>
</dbReference>
<dbReference type="GO" id="GO:0140627">
    <property type="term" value="P:ubiquitin-dependent protein catabolic process via the C-end degron rule pathway"/>
    <property type="evidence" value="ECO:0000314"/>
    <property type="project" value="UniProtKB"/>
</dbReference>
<dbReference type="FunFam" id="2.130.10.10:FF:001190">
    <property type="entry name" value="DDB1 and CUL4 associated factor 12"/>
    <property type="match status" value="1"/>
</dbReference>
<dbReference type="FunFam" id="2.130.10.10:FF:000253">
    <property type="entry name" value="DDB1- and CUL4-associated factor 12"/>
    <property type="match status" value="1"/>
</dbReference>
<dbReference type="Gene3D" id="2.130.10.10">
    <property type="entry name" value="YVTN repeat-like/Quinoprotein amine dehydrogenase"/>
    <property type="match status" value="2"/>
</dbReference>
<dbReference type="InterPro" id="IPR056151">
    <property type="entry name" value="Beta-prop_DCAF12"/>
</dbReference>
<dbReference type="InterPro" id="IPR051191">
    <property type="entry name" value="DCAF12"/>
</dbReference>
<dbReference type="InterPro" id="IPR015943">
    <property type="entry name" value="WD40/YVTN_repeat-like_dom_sf"/>
</dbReference>
<dbReference type="InterPro" id="IPR019775">
    <property type="entry name" value="WD40_repeat_CS"/>
</dbReference>
<dbReference type="InterPro" id="IPR036322">
    <property type="entry name" value="WD40_repeat_dom_sf"/>
</dbReference>
<dbReference type="InterPro" id="IPR001680">
    <property type="entry name" value="WD40_rpt"/>
</dbReference>
<dbReference type="PANTHER" id="PTHR19860:SF10">
    <property type="entry name" value="DDB1- AND CUL4-ASSOCIATED FACTOR 12"/>
    <property type="match status" value="1"/>
</dbReference>
<dbReference type="PANTHER" id="PTHR19860">
    <property type="entry name" value="DDB1- AND CUL4-ASSOCIATED FACTOR 12-RELATED"/>
    <property type="match status" value="1"/>
</dbReference>
<dbReference type="Pfam" id="PF23760">
    <property type="entry name" value="Beta-prop_DCAF12"/>
    <property type="match status" value="1"/>
</dbReference>
<dbReference type="SMART" id="SM00320">
    <property type="entry name" value="WD40"/>
    <property type="match status" value="4"/>
</dbReference>
<dbReference type="SUPFAM" id="SSF50978">
    <property type="entry name" value="WD40 repeat-like"/>
    <property type="match status" value="1"/>
</dbReference>
<dbReference type="PROSITE" id="PS00678">
    <property type="entry name" value="WD_REPEATS_1"/>
    <property type="match status" value="1"/>
</dbReference>
<dbReference type="PROSITE" id="PS50082">
    <property type="entry name" value="WD_REPEATS_2"/>
    <property type="match status" value="1"/>
</dbReference>
<dbReference type="PROSITE" id="PS50294">
    <property type="entry name" value="WD_REPEATS_REGION"/>
    <property type="match status" value="1"/>
</dbReference>
<gene>
    <name evidence="10 13" type="primary">DCAF12</name>
    <name evidence="9" type="synonym">KIAA1892</name>
    <name evidence="11" type="synonym">TCC52</name>
    <name evidence="13" type="synonym">WDR40A</name>
</gene>
<reference key="1">
    <citation type="submission" date="2006-04" db="EMBL/GenBank/DDBJ databases">
        <authorList>
            <person name="He D."/>
            <person name="Li S."/>
            <person name="Hu X."/>
            <person name="Luo C."/>
            <person name="Ceng C."/>
        </authorList>
    </citation>
    <scope>NUCLEOTIDE SEQUENCE [MRNA]</scope>
</reference>
<reference key="2">
    <citation type="journal article" date="2001" name="DNA Res.">
        <title>Prediction of the coding sequences of unidentified human genes. XXI. The complete sequences of 60 new cDNA clones from brain which code for large proteins.</title>
        <authorList>
            <person name="Nagase T."/>
            <person name="Kikuno R."/>
            <person name="Ohara O."/>
        </authorList>
    </citation>
    <scope>NUCLEOTIDE SEQUENCE [LARGE SCALE MRNA]</scope>
    <source>
        <tissue>Brain</tissue>
    </source>
</reference>
<reference key="3">
    <citation type="journal article" date="2004" name="Nat. Genet.">
        <title>Complete sequencing and characterization of 21,243 full-length human cDNAs.</title>
        <authorList>
            <person name="Ota T."/>
            <person name="Suzuki Y."/>
            <person name="Nishikawa T."/>
            <person name="Otsuki T."/>
            <person name="Sugiyama T."/>
            <person name="Irie R."/>
            <person name="Wakamatsu A."/>
            <person name="Hayashi K."/>
            <person name="Sato H."/>
            <person name="Nagai K."/>
            <person name="Kimura K."/>
            <person name="Makita H."/>
            <person name="Sekine M."/>
            <person name="Obayashi M."/>
            <person name="Nishi T."/>
            <person name="Shibahara T."/>
            <person name="Tanaka T."/>
            <person name="Ishii S."/>
            <person name="Yamamoto J."/>
            <person name="Saito K."/>
            <person name="Kawai Y."/>
            <person name="Isono Y."/>
            <person name="Nakamura Y."/>
            <person name="Nagahari K."/>
            <person name="Murakami K."/>
            <person name="Yasuda T."/>
            <person name="Iwayanagi T."/>
            <person name="Wagatsuma M."/>
            <person name="Shiratori A."/>
            <person name="Sudo H."/>
            <person name="Hosoiri T."/>
            <person name="Kaku Y."/>
            <person name="Kodaira H."/>
            <person name="Kondo H."/>
            <person name="Sugawara M."/>
            <person name="Takahashi M."/>
            <person name="Kanda K."/>
            <person name="Yokoi T."/>
            <person name="Furuya T."/>
            <person name="Kikkawa E."/>
            <person name="Omura Y."/>
            <person name="Abe K."/>
            <person name="Kamihara K."/>
            <person name="Katsuta N."/>
            <person name="Sato K."/>
            <person name="Tanikawa M."/>
            <person name="Yamazaki M."/>
            <person name="Ninomiya K."/>
            <person name="Ishibashi T."/>
            <person name="Yamashita H."/>
            <person name="Murakawa K."/>
            <person name="Fujimori K."/>
            <person name="Tanai H."/>
            <person name="Kimata M."/>
            <person name="Watanabe M."/>
            <person name="Hiraoka S."/>
            <person name="Chiba Y."/>
            <person name="Ishida S."/>
            <person name="Ono Y."/>
            <person name="Takiguchi S."/>
            <person name="Watanabe S."/>
            <person name="Yosida M."/>
            <person name="Hotuta T."/>
            <person name="Kusano J."/>
            <person name="Kanehori K."/>
            <person name="Takahashi-Fujii A."/>
            <person name="Hara H."/>
            <person name="Tanase T.-O."/>
            <person name="Nomura Y."/>
            <person name="Togiya S."/>
            <person name="Komai F."/>
            <person name="Hara R."/>
            <person name="Takeuchi K."/>
            <person name="Arita M."/>
            <person name="Imose N."/>
            <person name="Musashino K."/>
            <person name="Yuuki H."/>
            <person name="Oshima A."/>
            <person name="Sasaki N."/>
            <person name="Aotsuka S."/>
            <person name="Yoshikawa Y."/>
            <person name="Matsunawa H."/>
            <person name="Ichihara T."/>
            <person name="Shiohata N."/>
            <person name="Sano S."/>
            <person name="Moriya S."/>
            <person name="Momiyama H."/>
            <person name="Satoh N."/>
            <person name="Takami S."/>
            <person name="Terashima Y."/>
            <person name="Suzuki O."/>
            <person name="Nakagawa S."/>
            <person name="Senoh A."/>
            <person name="Mizoguchi H."/>
            <person name="Goto Y."/>
            <person name="Shimizu F."/>
            <person name="Wakebe H."/>
            <person name="Hishigaki H."/>
            <person name="Watanabe T."/>
            <person name="Sugiyama A."/>
            <person name="Takemoto M."/>
            <person name="Kawakami B."/>
            <person name="Yamazaki M."/>
            <person name="Watanabe K."/>
            <person name="Kumagai A."/>
            <person name="Itakura S."/>
            <person name="Fukuzumi Y."/>
            <person name="Fujimori Y."/>
            <person name="Komiyama M."/>
            <person name="Tashiro H."/>
            <person name="Tanigami A."/>
            <person name="Fujiwara T."/>
            <person name="Ono T."/>
            <person name="Yamada K."/>
            <person name="Fujii Y."/>
            <person name="Ozaki K."/>
            <person name="Hirao M."/>
            <person name="Ohmori Y."/>
            <person name="Kawabata A."/>
            <person name="Hikiji T."/>
            <person name="Kobatake N."/>
            <person name="Inagaki H."/>
            <person name="Ikema Y."/>
            <person name="Okamoto S."/>
            <person name="Okitani R."/>
            <person name="Kawakami T."/>
            <person name="Noguchi S."/>
            <person name="Itoh T."/>
            <person name="Shigeta K."/>
            <person name="Senba T."/>
            <person name="Matsumura K."/>
            <person name="Nakajima Y."/>
            <person name="Mizuno T."/>
            <person name="Morinaga M."/>
            <person name="Sasaki M."/>
            <person name="Togashi T."/>
            <person name="Oyama M."/>
            <person name="Hata H."/>
            <person name="Watanabe M."/>
            <person name="Komatsu T."/>
            <person name="Mizushima-Sugano J."/>
            <person name="Satoh T."/>
            <person name="Shirai Y."/>
            <person name="Takahashi Y."/>
            <person name="Nakagawa K."/>
            <person name="Okumura K."/>
            <person name="Nagase T."/>
            <person name="Nomura N."/>
            <person name="Kikuchi H."/>
            <person name="Masuho Y."/>
            <person name="Yamashita R."/>
            <person name="Nakai K."/>
            <person name="Yada T."/>
            <person name="Nakamura Y."/>
            <person name="Ohara O."/>
            <person name="Isogai T."/>
            <person name="Sugano S."/>
        </authorList>
    </citation>
    <scope>NUCLEOTIDE SEQUENCE [LARGE SCALE MRNA]</scope>
    <source>
        <tissue>Hepatoma</tissue>
        <tissue>Trachea</tissue>
    </source>
</reference>
<reference key="4">
    <citation type="journal article" date="2004" name="Nature">
        <title>DNA sequence and analysis of human chromosome 9.</title>
        <authorList>
            <person name="Humphray S.J."/>
            <person name="Oliver K."/>
            <person name="Hunt A.R."/>
            <person name="Plumb R.W."/>
            <person name="Loveland J.E."/>
            <person name="Howe K.L."/>
            <person name="Andrews T.D."/>
            <person name="Searle S."/>
            <person name="Hunt S.E."/>
            <person name="Scott C.E."/>
            <person name="Jones M.C."/>
            <person name="Ainscough R."/>
            <person name="Almeida J.P."/>
            <person name="Ambrose K.D."/>
            <person name="Ashwell R.I.S."/>
            <person name="Babbage A.K."/>
            <person name="Babbage S."/>
            <person name="Bagguley C.L."/>
            <person name="Bailey J."/>
            <person name="Banerjee R."/>
            <person name="Barker D.J."/>
            <person name="Barlow K.F."/>
            <person name="Bates K."/>
            <person name="Beasley H."/>
            <person name="Beasley O."/>
            <person name="Bird C.P."/>
            <person name="Bray-Allen S."/>
            <person name="Brown A.J."/>
            <person name="Brown J.Y."/>
            <person name="Burford D."/>
            <person name="Burrill W."/>
            <person name="Burton J."/>
            <person name="Carder C."/>
            <person name="Carter N.P."/>
            <person name="Chapman J.C."/>
            <person name="Chen Y."/>
            <person name="Clarke G."/>
            <person name="Clark S.Y."/>
            <person name="Clee C.M."/>
            <person name="Clegg S."/>
            <person name="Collier R.E."/>
            <person name="Corby N."/>
            <person name="Crosier M."/>
            <person name="Cummings A.T."/>
            <person name="Davies J."/>
            <person name="Dhami P."/>
            <person name="Dunn M."/>
            <person name="Dutta I."/>
            <person name="Dyer L.W."/>
            <person name="Earthrowl M.E."/>
            <person name="Faulkner L."/>
            <person name="Fleming C.J."/>
            <person name="Frankish A."/>
            <person name="Frankland J.A."/>
            <person name="French L."/>
            <person name="Fricker D.G."/>
            <person name="Garner P."/>
            <person name="Garnett J."/>
            <person name="Ghori J."/>
            <person name="Gilbert J.G.R."/>
            <person name="Glison C."/>
            <person name="Grafham D.V."/>
            <person name="Gribble S."/>
            <person name="Griffiths C."/>
            <person name="Griffiths-Jones S."/>
            <person name="Grocock R."/>
            <person name="Guy J."/>
            <person name="Hall R.E."/>
            <person name="Hammond S."/>
            <person name="Harley J.L."/>
            <person name="Harrison E.S.I."/>
            <person name="Hart E.A."/>
            <person name="Heath P.D."/>
            <person name="Henderson C.D."/>
            <person name="Hopkins B.L."/>
            <person name="Howard P.J."/>
            <person name="Howden P.J."/>
            <person name="Huckle E."/>
            <person name="Johnson C."/>
            <person name="Johnson D."/>
            <person name="Joy A.A."/>
            <person name="Kay M."/>
            <person name="Keenan S."/>
            <person name="Kershaw J.K."/>
            <person name="Kimberley A.M."/>
            <person name="King A."/>
            <person name="Knights A."/>
            <person name="Laird G.K."/>
            <person name="Langford C."/>
            <person name="Lawlor S."/>
            <person name="Leongamornlert D.A."/>
            <person name="Leversha M."/>
            <person name="Lloyd C."/>
            <person name="Lloyd D.M."/>
            <person name="Lovell J."/>
            <person name="Martin S."/>
            <person name="Mashreghi-Mohammadi M."/>
            <person name="Matthews L."/>
            <person name="McLaren S."/>
            <person name="McLay K.E."/>
            <person name="McMurray A."/>
            <person name="Milne S."/>
            <person name="Nickerson T."/>
            <person name="Nisbett J."/>
            <person name="Nordsiek G."/>
            <person name="Pearce A.V."/>
            <person name="Peck A.I."/>
            <person name="Porter K.M."/>
            <person name="Pandian R."/>
            <person name="Pelan S."/>
            <person name="Phillimore B."/>
            <person name="Povey S."/>
            <person name="Ramsey Y."/>
            <person name="Rand V."/>
            <person name="Scharfe M."/>
            <person name="Sehra H.K."/>
            <person name="Shownkeen R."/>
            <person name="Sims S.K."/>
            <person name="Skuce C.D."/>
            <person name="Smith M."/>
            <person name="Steward C.A."/>
            <person name="Swarbreck D."/>
            <person name="Sycamore N."/>
            <person name="Tester J."/>
            <person name="Thorpe A."/>
            <person name="Tracey A."/>
            <person name="Tromans A."/>
            <person name="Thomas D.W."/>
            <person name="Wall M."/>
            <person name="Wallis J.M."/>
            <person name="West A.P."/>
            <person name="Whitehead S.L."/>
            <person name="Willey D.L."/>
            <person name="Williams S.A."/>
            <person name="Wilming L."/>
            <person name="Wray P.W."/>
            <person name="Young L."/>
            <person name="Ashurst J.L."/>
            <person name="Coulson A."/>
            <person name="Blocker H."/>
            <person name="Durbin R.M."/>
            <person name="Sulston J.E."/>
            <person name="Hubbard T."/>
            <person name="Jackson M.J."/>
            <person name="Bentley D.R."/>
            <person name="Beck S."/>
            <person name="Rogers J."/>
            <person name="Dunham I."/>
        </authorList>
    </citation>
    <scope>NUCLEOTIDE SEQUENCE [LARGE SCALE GENOMIC DNA]</scope>
</reference>
<reference key="5">
    <citation type="submission" date="2005-09" db="EMBL/GenBank/DDBJ databases">
        <authorList>
            <person name="Mural R.J."/>
            <person name="Istrail S."/>
            <person name="Sutton G.G."/>
            <person name="Florea L."/>
            <person name="Halpern A.L."/>
            <person name="Mobarry C.M."/>
            <person name="Lippert R."/>
            <person name="Walenz B."/>
            <person name="Shatkay H."/>
            <person name="Dew I."/>
            <person name="Miller J.R."/>
            <person name="Flanigan M.J."/>
            <person name="Edwards N.J."/>
            <person name="Bolanos R."/>
            <person name="Fasulo D."/>
            <person name="Halldorsson B.V."/>
            <person name="Hannenhalli S."/>
            <person name="Turner R."/>
            <person name="Yooseph S."/>
            <person name="Lu F."/>
            <person name="Nusskern D.R."/>
            <person name="Shue B.C."/>
            <person name="Zheng X.H."/>
            <person name="Zhong F."/>
            <person name="Delcher A.L."/>
            <person name="Huson D.H."/>
            <person name="Kravitz S.A."/>
            <person name="Mouchard L."/>
            <person name="Reinert K."/>
            <person name="Remington K.A."/>
            <person name="Clark A.G."/>
            <person name="Waterman M.S."/>
            <person name="Eichler E.E."/>
            <person name="Adams M.D."/>
            <person name="Hunkapiller M.W."/>
            <person name="Myers E.W."/>
            <person name="Venter J.C."/>
        </authorList>
    </citation>
    <scope>NUCLEOTIDE SEQUENCE [LARGE SCALE GENOMIC DNA]</scope>
</reference>
<reference key="6">
    <citation type="journal article" date="2004" name="Genome Res.">
        <title>The status, quality, and expansion of the NIH full-length cDNA project: the Mammalian Gene Collection (MGC).</title>
        <authorList>
            <consortium name="The MGC Project Team"/>
        </authorList>
    </citation>
    <scope>NUCLEOTIDE SEQUENCE [LARGE SCALE MRNA]</scope>
    <scope>VARIANT GLN-131</scope>
    <source>
        <tissue>Lymph</tissue>
        <tissue>PNS</tissue>
    </source>
</reference>
<reference key="7">
    <citation type="journal article" date="2007" name="BMC Genomics">
        <title>The full-ORF clone resource of the German cDNA consortium.</title>
        <authorList>
            <person name="Bechtel S."/>
            <person name="Rosenfelder H."/>
            <person name="Duda A."/>
            <person name="Schmidt C.P."/>
            <person name="Ernst U."/>
            <person name="Wellenreuther R."/>
            <person name="Mehrle A."/>
            <person name="Schuster C."/>
            <person name="Bahr A."/>
            <person name="Bloecker H."/>
            <person name="Heubner D."/>
            <person name="Hoerlein A."/>
            <person name="Michel G."/>
            <person name="Wedler H."/>
            <person name="Koehrer K."/>
            <person name="Ottenwaelder B."/>
            <person name="Poustka A."/>
            <person name="Wiemann S."/>
            <person name="Schupp I."/>
        </authorList>
    </citation>
    <scope>NUCLEOTIDE SEQUENCE [LARGE SCALE MRNA] OF 179-453</scope>
    <source>
        <tissue>Testis</tissue>
    </source>
</reference>
<reference key="8">
    <citation type="journal article" date="2006" name="Mol. Cell">
        <title>A family of diverse Cul4-Ddb1-interacting proteins includes Cdt2, which is required for S phase destruction of the replication factor Cdt1.</title>
        <authorList>
            <person name="Jin J."/>
            <person name="Arias E.E."/>
            <person name="Chen J."/>
            <person name="Harper J.W."/>
            <person name="Walter J.C."/>
        </authorList>
    </citation>
    <scope>FUNCTION</scope>
    <scope>INTERACTION WITH DDB1</scope>
    <scope>IDENTIFICATION BY MASS SPECTROMETRY</scope>
    <scope>MUTAGENESIS OF ARG-368</scope>
</reference>
<reference key="9">
    <citation type="journal article" date="2006" name="Nature">
        <title>Molecular architecture and assembly of the DDB1-CUL4A ubiquitin ligase machinery.</title>
        <authorList>
            <person name="Angers S."/>
            <person name="Li T."/>
            <person name="Yi X."/>
            <person name="MacCoss M.J."/>
            <person name="Moon R.T."/>
            <person name="Zheng N."/>
        </authorList>
    </citation>
    <scope>FUNCTION</scope>
</reference>
<reference key="10">
    <citation type="journal article" date="2008" name="Cancer Sci.">
        <title>Novel centrosome protein, TCC52, is a cancer-testis antigen.</title>
        <authorList>
            <person name="Li S."/>
            <person name="Hu X."/>
            <person name="Cui S."/>
            <person name="He D."/>
        </authorList>
    </citation>
    <scope>IDENTIFICATION BY MASS SPECTROMETRY</scope>
    <scope>SUBCELLULAR LOCATION</scope>
    <scope>TISSUE SPECIFICITY</scope>
</reference>
<reference key="11">
    <citation type="journal article" date="2013" name="J. Proteome Res.">
        <title>Toward a comprehensive characterization of a human cancer cell phosphoproteome.</title>
        <authorList>
            <person name="Zhou H."/>
            <person name="Di Palma S."/>
            <person name="Preisinger C."/>
            <person name="Peng M."/>
            <person name="Polat A.N."/>
            <person name="Heck A.J."/>
            <person name="Mohammed S."/>
        </authorList>
    </citation>
    <scope>PHOSPHORYLATION [LARGE SCALE ANALYSIS] AT SER-15</scope>
    <scope>IDENTIFICATION BY MASS SPECTROMETRY [LARGE SCALE ANALYSIS]</scope>
    <source>
        <tissue>Cervix carcinoma</tissue>
    </source>
</reference>
<reference key="12">
    <citation type="journal article" date="2018" name="Cell">
        <title>The eukaryotic proteome is shaped by E3 ubiquitin ligases targeting C-terminal degrons.</title>
        <authorList>
            <person name="Koren I."/>
            <person name="Timms R.T."/>
            <person name="Kula T."/>
            <person name="Xu Q."/>
            <person name="Li M.Z."/>
            <person name="Elledge S.J."/>
        </authorList>
    </citation>
    <scope>FUNCTION</scope>
    <scope>PATHWAY</scope>
    <scope>IDENTIFICATION IN A DCX E3 UBIQUITIN-PROTEIN LIGASE COMPLEX</scope>
</reference>
<reference key="13">
    <citation type="journal article" date="2019" name="EMBO Rep.">
        <title>Regulation of MAGE-A3/6 by the CRL4-DCAF12 ubiquitin ligase and nutrient availability.</title>
        <authorList>
            <person name="Ravichandran R."/>
            <person name="Kodali K."/>
            <person name="Peng J."/>
            <person name="Potts P.R."/>
        </authorList>
    </citation>
    <scope>FUNCTION</scope>
    <scope>PATHWAY</scope>
    <scope>IDENTIFICATION IN A DCX E3 UBIQUITIN-PROTEIN LIGASE COMPLEX</scope>
</reference>
<reference key="14">
    <citation type="journal article" date="2021" name="Int. J. Mol. Sci.">
        <title>CRL4-DCAF12 Ubiquitin Ligase Controls MOV10 RNA Helicase during Spermatogenesis and T Cell Activation.</title>
        <authorList>
            <person name="Lidak T."/>
            <person name="Baloghova N."/>
            <person name="Korinek V."/>
            <person name="Sedlacek R."/>
            <person name="Balounova J."/>
            <person name="Kasparek P."/>
            <person name="Cermak L."/>
        </authorList>
    </citation>
    <scope>FUNCTION</scope>
    <scope>SUBCELLULAR LOCATION</scope>
    <scope>IDENTIFICATION IN A DCX E3 UBIQUITIN-PROTEIN LIGASE COMPLEX</scope>
</reference>
<reference evidence="14" key="15">
    <citation type="journal article" date="2010" name="Nat. Struct. Mol. Biol.">
        <title>A promiscuous alpha-helical motif anchors viral hijackers and substrate receptors to the CUL4-DDB1 ubiquitin ligase machinery.</title>
        <authorList>
            <person name="Li T."/>
            <person name="Robert E.I."/>
            <person name="van Breugel P.C."/>
            <person name="Strubin M."/>
            <person name="Zheng N."/>
        </authorList>
    </citation>
    <scope>X-RAY CRYSTALLOGRAPHY (3.00 ANGSTROMS) OF 45-57</scope>
</reference>
<evidence type="ECO:0000256" key="1">
    <source>
        <dbReference type="SAM" id="MobiDB-lite"/>
    </source>
</evidence>
<evidence type="ECO:0000269" key="2">
    <source>
    </source>
</evidence>
<evidence type="ECO:0000269" key="3">
    <source>
    </source>
</evidence>
<evidence type="ECO:0000269" key="4">
    <source>
    </source>
</evidence>
<evidence type="ECO:0000269" key="5">
    <source>
    </source>
</evidence>
<evidence type="ECO:0000269" key="6">
    <source>
    </source>
</evidence>
<evidence type="ECO:0000269" key="7">
    <source>
    </source>
</evidence>
<evidence type="ECO:0000269" key="8">
    <source>
    </source>
</evidence>
<evidence type="ECO:0000303" key="9">
    <source>
    </source>
</evidence>
<evidence type="ECO:0000303" key="10">
    <source>
    </source>
</evidence>
<evidence type="ECO:0000303" key="11">
    <source>
    </source>
</evidence>
<evidence type="ECO:0000305" key="12"/>
<evidence type="ECO:0000312" key="13">
    <source>
        <dbReference type="HGNC" id="HGNC:19911"/>
    </source>
</evidence>
<evidence type="ECO:0007744" key="14">
    <source>
        <dbReference type="PDB" id="3I7P"/>
    </source>
</evidence>
<evidence type="ECO:0007744" key="15">
    <source>
    </source>
</evidence>
<evidence type="ECO:0007829" key="16">
    <source>
        <dbReference type="PDB" id="8AJM"/>
    </source>
</evidence>
<evidence type="ECO:0007829" key="17">
    <source>
        <dbReference type="PDB" id="8AJN"/>
    </source>
</evidence>
<sequence>MARKVVSRKRKAPASPGAGSDAQGPQFGWDHSLHKRKRLPPVKRSLVYYLKNREVRLQNETSYSRVLHGYAAQQLPSLLKEREFHLGTLNKVFASQWLNHRQVVCGTKCNTLFVVDVQTSQITKIPILKDREPGGVTQQGCGIHAIELNPSRTLLATGGDNPNSLAIYRLPTLDPVCVGDDGHKDWIFSIAWISDTMAVSGSRDGSMGLWEVTDDVLTKSDARHNVSRVPVYAHITHKALKDIPKEDTNPDNCKVRALAFNNKNKELGAVSLDGYFHLWKAENTLSKLLSTKLPYCRENVCLAYGSEWSVYAVGSQAHVSFLDPRQPSYNVKSVCSRERGSGIRSVSFYEHIITVGTGQGSLLFYDIRAQRFLEERLSACYGSKPRLAGENLKLTTGKGWLNHDETWRNYFSDIDFFPNAVYTHCYDSSGTKLFVAGGPLPSGLHGNYAGLWS</sequence>
<keyword id="KW-0002">3D-structure</keyword>
<keyword id="KW-0963">Cytoplasm</keyword>
<keyword id="KW-0206">Cytoskeleton</keyword>
<keyword id="KW-0539">Nucleus</keyword>
<keyword id="KW-0597">Phosphoprotein</keyword>
<keyword id="KW-1267">Proteomics identification</keyword>
<keyword id="KW-1185">Reference proteome</keyword>
<keyword id="KW-0677">Repeat</keyword>
<keyword id="KW-0833">Ubl conjugation pathway</keyword>
<keyword id="KW-0853">WD repeat</keyword>
<feature type="chain" id="PRO_0000306840" description="DDB1- and CUL4-associated factor 12">
    <location>
        <begin position="1"/>
        <end position="453"/>
    </location>
</feature>
<feature type="repeat" description="WD 1">
    <location>
        <begin position="81"/>
        <end position="122"/>
    </location>
</feature>
<feature type="repeat" description="WD 2">
    <location>
        <begin position="123"/>
        <end position="175"/>
    </location>
</feature>
<feature type="repeat" description="WD 3">
    <location>
        <begin position="176"/>
        <end position="242"/>
    </location>
</feature>
<feature type="repeat" description="WD 4">
    <location>
        <begin position="243"/>
        <end position="286"/>
    </location>
</feature>
<feature type="repeat" description="WD 5">
    <location>
        <begin position="287"/>
        <end position="331"/>
    </location>
</feature>
<feature type="repeat" description="WD 6">
    <location>
        <begin position="332"/>
        <end position="366"/>
    </location>
</feature>
<feature type="region of interest" description="Required for nuclear location and interaction with MOV10" evidence="8">
    <location>
        <begin position="1"/>
        <end position="38"/>
    </location>
</feature>
<feature type="region of interest" description="Disordered" evidence="1">
    <location>
        <begin position="1"/>
        <end position="34"/>
    </location>
</feature>
<feature type="compositionally biased region" description="Basic residues" evidence="1">
    <location>
        <begin position="1"/>
        <end position="12"/>
    </location>
</feature>
<feature type="modified residue" description="Phosphoserine" evidence="15">
    <location>
        <position position="15"/>
    </location>
</feature>
<feature type="sequence variant" id="VAR_035322" description="In dbSNP:rs11557154." evidence="2">
    <original>R</original>
    <variation>Q</variation>
    <location>
        <position position="131"/>
    </location>
</feature>
<feature type="mutagenesis site" description="Reduces association with DDB1." evidence="3">
    <original>R</original>
    <variation>A</variation>
    <location>
        <position position="368"/>
    </location>
</feature>
<feature type="sequence conflict" description="In Ref. 3; BAA91106." evidence="12" ref="3">
    <original>N</original>
    <variation>H</variation>
    <location>
        <position position="149"/>
    </location>
</feature>
<feature type="helix" evidence="16">
    <location>
        <begin position="46"/>
        <end position="53"/>
    </location>
</feature>
<feature type="turn" evidence="16">
    <location>
        <begin position="54"/>
        <end position="56"/>
    </location>
</feature>
<feature type="helix" evidence="17">
    <location>
        <begin position="61"/>
        <end position="63"/>
    </location>
</feature>
<feature type="helix" evidence="16">
    <location>
        <begin position="64"/>
        <end position="74"/>
    </location>
</feature>
<feature type="helix" evidence="16">
    <location>
        <begin position="75"/>
        <end position="77"/>
    </location>
</feature>
<feature type="strand" evidence="16">
    <location>
        <begin position="81"/>
        <end position="83"/>
    </location>
</feature>
<feature type="strand" evidence="16">
    <location>
        <begin position="92"/>
        <end position="107"/>
    </location>
</feature>
<feature type="strand" evidence="16">
    <location>
        <begin position="112"/>
        <end position="116"/>
    </location>
</feature>
<feature type="turn" evidence="16">
    <location>
        <begin position="117"/>
        <end position="120"/>
    </location>
</feature>
<feature type="strand" evidence="16">
    <location>
        <begin position="121"/>
        <end position="125"/>
    </location>
</feature>
<feature type="strand" evidence="16">
    <location>
        <begin position="130"/>
        <end position="132"/>
    </location>
</feature>
<feature type="strand" evidence="16">
    <location>
        <begin position="146"/>
        <end position="148"/>
    </location>
</feature>
<feature type="strand" evidence="16">
    <location>
        <begin position="152"/>
        <end position="158"/>
    </location>
</feature>
<feature type="strand" evidence="16">
    <location>
        <begin position="164"/>
        <end position="169"/>
    </location>
</feature>
<feature type="turn" evidence="16">
    <location>
        <begin position="170"/>
        <end position="173"/>
    </location>
</feature>
<feature type="strand" evidence="16">
    <location>
        <begin position="174"/>
        <end position="177"/>
    </location>
</feature>
<feature type="strand" evidence="16">
    <location>
        <begin position="190"/>
        <end position="200"/>
    </location>
</feature>
<feature type="strand" evidence="16">
    <location>
        <begin position="205"/>
        <end position="211"/>
    </location>
</feature>
<feature type="helix" evidence="16">
    <location>
        <begin position="214"/>
        <end position="226"/>
    </location>
</feature>
<feature type="strand" evidence="16">
    <location>
        <begin position="238"/>
        <end position="242"/>
    </location>
</feature>
<feature type="strand" evidence="16">
    <location>
        <begin position="255"/>
        <end position="261"/>
    </location>
</feature>
<feature type="turn" evidence="16">
    <location>
        <begin position="262"/>
        <end position="265"/>
    </location>
</feature>
<feature type="strand" evidence="16">
    <location>
        <begin position="266"/>
        <end position="271"/>
    </location>
</feature>
<feature type="strand" evidence="16">
    <location>
        <begin position="274"/>
        <end position="280"/>
    </location>
</feature>
<feature type="strand" evidence="16">
    <location>
        <begin position="282"/>
        <end position="284"/>
    </location>
</feature>
<feature type="strand" evidence="16">
    <location>
        <begin position="286"/>
        <end position="292"/>
    </location>
</feature>
<feature type="strand" evidence="16">
    <location>
        <begin position="302"/>
        <end position="304"/>
    </location>
</feature>
<feature type="turn" evidence="16">
    <location>
        <begin position="306"/>
        <end position="308"/>
    </location>
</feature>
<feature type="strand" evidence="16">
    <location>
        <begin position="311"/>
        <end position="313"/>
    </location>
</feature>
<feature type="strand" evidence="16">
    <location>
        <begin position="316"/>
        <end position="322"/>
    </location>
</feature>
<feature type="helix" evidence="17">
    <location>
        <begin position="328"/>
        <end position="330"/>
    </location>
</feature>
<feature type="strand" evidence="16">
    <location>
        <begin position="332"/>
        <end position="335"/>
    </location>
</feature>
<feature type="strand" evidence="16">
    <location>
        <begin position="343"/>
        <end position="349"/>
    </location>
</feature>
<feature type="strand" evidence="16">
    <location>
        <begin position="352"/>
        <end position="357"/>
    </location>
</feature>
<feature type="strand" evidence="16">
    <location>
        <begin position="360"/>
        <end position="366"/>
    </location>
</feature>
<feature type="turn" evidence="16">
    <location>
        <begin position="367"/>
        <end position="370"/>
    </location>
</feature>
<feature type="strand" evidence="16">
    <location>
        <begin position="393"/>
        <end position="395"/>
    </location>
</feature>
<feature type="helix" evidence="16">
    <location>
        <begin position="405"/>
        <end position="410"/>
    </location>
</feature>
<feature type="turn" evidence="16">
    <location>
        <begin position="411"/>
        <end position="413"/>
    </location>
</feature>
<feature type="strand" evidence="16">
    <location>
        <begin position="419"/>
        <end position="426"/>
    </location>
</feature>
<feature type="strand" evidence="17">
    <location>
        <begin position="428"/>
        <end position="431"/>
    </location>
</feature>
<feature type="strand" evidence="16">
    <location>
        <begin position="433"/>
        <end position="441"/>
    </location>
</feature>
<feature type="strand" evidence="16">
    <location>
        <begin position="448"/>
        <end position="452"/>
    </location>
</feature>
<accession>Q5T6F0</accession>
<accession>A8KA70</accession>
<accession>D3DRL6</accession>
<accession>Q5T6E9</accession>
<accession>Q5T6F1</accession>
<accession>Q6P3V0</accession>
<accession>Q7L4F8</accession>
<accession>Q96PZ5</accession>
<accession>Q9NXA9</accession>
<accession>Q9UFJ1</accession>
<organism>
    <name type="scientific">Homo sapiens</name>
    <name type="common">Human</name>
    <dbReference type="NCBI Taxonomy" id="9606"/>
    <lineage>
        <taxon>Eukaryota</taxon>
        <taxon>Metazoa</taxon>
        <taxon>Chordata</taxon>
        <taxon>Craniata</taxon>
        <taxon>Vertebrata</taxon>
        <taxon>Euteleostomi</taxon>
        <taxon>Mammalia</taxon>
        <taxon>Eutheria</taxon>
        <taxon>Euarchontoglires</taxon>
        <taxon>Primates</taxon>
        <taxon>Haplorrhini</taxon>
        <taxon>Catarrhini</taxon>
        <taxon>Hominidae</taxon>
        <taxon>Homo</taxon>
    </lineage>
</organism>